<accession>Q8T117</accession>
<protein>
    <recommendedName>
        <fullName evidence="10">Adhesion protein Bd37</fullName>
    </recommendedName>
    <alternativeName>
        <fullName evidence="9">37 kDa exoantigen</fullName>
    </alternativeName>
    <alternativeName>
        <fullName evidence="13">Glycosylphosphatidylinositol-anchored merozoite surface protein</fullName>
    </alternativeName>
</protein>
<comment type="function">
    <text evidence="7">Binds to host erythrocytes.</text>
</comment>
<comment type="subcellular location">
    <subcellularLocation>
        <location evidence="4 8">Cell membrane</location>
        <topology evidence="4">Lipid-anchor</topology>
        <topology evidence="4">GPI-anchor</topology>
    </subcellularLocation>
    <subcellularLocation>
        <location evidence="8">Secreted</location>
    </subcellularLocation>
    <subcellularLocation>
        <location evidence="5 8">Vesicle</location>
    </subcellularLocation>
    <text evidence="5 8">Localizes to the membrane of the intraerythrocytic merozoites and inside parasite vesicles.</text>
</comment>
<comment type="developmental stage">
    <text evidence="5 8">Expressed in merozoites (at protein level).</text>
</comment>
<comment type="PTM">
    <text evidence="4">The signal sequence is cleaved.</text>
</comment>
<comment type="PTM">
    <text evidence="8">Glycosylated.</text>
</comment>
<comment type="PTM">
    <text evidence="8">Palmitoylated.</text>
</comment>
<comment type="PTM">
    <text evidence="8">Not myristoylated.</text>
</comment>
<comment type="miscellaneous">
    <text evidence="5 6">Vaccinations with the recombinant proteins derived from Rouen 1987/Rouen87 or Weybridge 8843/W8843 strains protect gerbils against heterologous challenges with Rouen87, W8843, Y5, 6303E and 1705A isolates (PubMed:17038236). Monoclonal antibodies MAbF4.2F8 raised against the protein derived from Rouen 1987/Rouen87 isolate protect against virulent challenges with Rouen87 and Weybridge 8843/W8843 isolates but not 6303E isolate (PubMed:15064123).</text>
</comment>
<feature type="signal peptide" evidence="1">
    <location>
        <begin position="1"/>
        <end position="21"/>
    </location>
</feature>
<feature type="chain" id="PRO_0000460720" description="Adhesion protein Bd37" evidence="1">
    <location>
        <begin position="22"/>
        <end position="311"/>
    </location>
</feature>
<feature type="propeptide" id="PRO_0000460721" description="Removed in mature form" evidence="1">
    <location>
        <begin position="312"/>
        <end position="341"/>
    </location>
</feature>
<feature type="region of interest" description="Disordered" evidence="3">
    <location>
        <begin position="36"/>
        <end position="75"/>
    </location>
</feature>
<feature type="compositionally biased region" description="Low complexity" evidence="3">
    <location>
        <begin position="49"/>
        <end position="59"/>
    </location>
</feature>
<feature type="compositionally biased region" description="Polar residues" evidence="3">
    <location>
        <begin position="60"/>
        <end position="75"/>
    </location>
</feature>
<feature type="lipid moiety-binding region" description="GPI-anchor amidated serine" evidence="1">
    <location>
        <position position="311"/>
    </location>
</feature>
<feature type="glycosylation site" description="N-linked (GlcNAc...) asparagine" evidence="2">
    <location>
        <position position="23"/>
    </location>
</feature>
<feature type="glycosylation site" description="N-linked (GlcNAc...) asparagine" evidence="2">
    <location>
        <position position="30"/>
    </location>
</feature>
<feature type="disulfide bond" evidence="4">
    <location>
        <begin position="26"/>
        <end position="307"/>
    </location>
</feature>
<feature type="mutagenesis site" description="No significant effects on erythrocyte binding." evidence="7">
    <original>K</original>
    <variation>A</variation>
    <location>
        <position position="83"/>
    </location>
</feature>
<feature type="mutagenesis site" description="Reduces erythrocyte binding." evidence="7">
    <original>T</original>
    <variation>A</variation>
    <location>
        <position position="84"/>
    </location>
</feature>
<feature type="mutagenesis site" description="No significant effects on erythrocyte binding." evidence="7">
    <original>D</original>
    <variation>A</variation>
    <location>
        <position position="86"/>
    </location>
</feature>
<feature type="mutagenesis site" description="No significant effects on erythrocyte binding." evidence="7">
    <original>L</original>
    <variation>A</variation>
    <location>
        <position position="92"/>
    </location>
</feature>
<feature type="mutagenesis site" description="Reduces erythrocyte binding." evidence="7">
    <original>Q</original>
    <variation>A</variation>
    <location>
        <position position="95"/>
    </location>
</feature>
<feature type="mutagenesis site" description="Abolishes erythrocyte binding." evidence="7">
    <original>R</original>
    <variation>A</variation>
    <location>
        <position position="96"/>
    </location>
</feature>
<feature type="helix" evidence="16">
    <location>
        <begin position="85"/>
        <end position="105"/>
    </location>
</feature>
<feature type="helix" evidence="16">
    <location>
        <begin position="114"/>
        <end position="125"/>
    </location>
</feature>
<feature type="turn" evidence="16">
    <location>
        <begin position="126"/>
        <end position="128"/>
    </location>
</feature>
<feature type="helix" evidence="16">
    <location>
        <begin position="132"/>
        <end position="150"/>
    </location>
</feature>
<feature type="helix" evidence="16">
    <location>
        <begin position="156"/>
        <end position="172"/>
    </location>
</feature>
<feature type="helix" evidence="16">
    <location>
        <begin position="185"/>
        <end position="206"/>
    </location>
</feature>
<feature type="helix" evidence="16">
    <location>
        <begin position="211"/>
        <end position="231"/>
    </location>
</feature>
<feature type="strand" evidence="16">
    <location>
        <begin position="232"/>
        <end position="234"/>
    </location>
</feature>
<feature type="helix" evidence="16">
    <location>
        <begin position="239"/>
        <end position="247"/>
    </location>
</feature>
<feature type="turn" evidence="16">
    <location>
        <begin position="255"/>
        <end position="257"/>
    </location>
</feature>
<feature type="helix" evidence="16">
    <location>
        <begin position="259"/>
        <end position="271"/>
    </location>
</feature>
<feature type="helix" evidence="16">
    <location>
        <begin position="278"/>
        <end position="299"/>
    </location>
</feature>
<name>BD37_BABDI</name>
<proteinExistence type="evidence at protein level"/>
<organism evidence="13">
    <name type="scientific">Babesia divergens</name>
    <dbReference type="NCBI Taxonomy" id="32595"/>
    <lineage>
        <taxon>Eukaryota</taxon>
        <taxon>Sar</taxon>
        <taxon>Alveolata</taxon>
        <taxon>Apicomplexa</taxon>
        <taxon>Aconoidasida</taxon>
        <taxon>Piroplasmida</taxon>
        <taxon>Babesiidae</taxon>
        <taxon>Babesia</taxon>
    </lineage>
</organism>
<dbReference type="EMBL" id="AJ422214">
    <property type="protein sequence ID" value="CAD19563.1"/>
    <property type="molecule type" value="mRNA"/>
</dbReference>
<dbReference type="PDB" id="2JO7">
    <property type="method" value="NMR"/>
    <property type="chains" value="A=82-305"/>
</dbReference>
<dbReference type="PDB" id="2LUD">
    <property type="method" value="NMR"/>
    <property type="chains" value="A=82-305"/>
</dbReference>
<dbReference type="PDBsum" id="2JO7"/>
<dbReference type="PDBsum" id="2LUD"/>
<dbReference type="SMR" id="Q8T117"/>
<dbReference type="VEuPathDB" id="PiroplasmaDB:Bdiv_033780"/>
<dbReference type="EvolutionaryTrace" id="Q8T117"/>
<dbReference type="GO" id="GO:0005576">
    <property type="term" value="C:extracellular region"/>
    <property type="evidence" value="ECO:0000314"/>
    <property type="project" value="UniProtKB"/>
</dbReference>
<dbReference type="GO" id="GO:0005886">
    <property type="term" value="C:plasma membrane"/>
    <property type="evidence" value="ECO:0000314"/>
    <property type="project" value="UniProtKB"/>
</dbReference>
<dbReference type="GO" id="GO:0098552">
    <property type="term" value="C:side of membrane"/>
    <property type="evidence" value="ECO:0007669"/>
    <property type="project" value="UniProtKB-KW"/>
</dbReference>
<dbReference type="GO" id="GO:0031982">
    <property type="term" value="C:vesicle"/>
    <property type="evidence" value="ECO:0007669"/>
    <property type="project" value="UniProtKB-SubCell"/>
</dbReference>
<dbReference type="GO" id="GO:0046812">
    <property type="term" value="F:host cell surface binding"/>
    <property type="evidence" value="ECO:0000314"/>
    <property type="project" value="UniProtKB"/>
</dbReference>
<dbReference type="Gene3D" id="1.10.4170.10">
    <property type="entry name" value="Glycosylphosphatidylinositol-anchored merozoite surface protein"/>
    <property type="match status" value="1"/>
</dbReference>
<dbReference type="InterPro" id="IPR021669">
    <property type="entry name" value="Bd37_core"/>
</dbReference>
<dbReference type="InterPro" id="IPR038272">
    <property type="entry name" value="Bd37_core_sf"/>
</dbReference>
<dbReference type="Pfam" id="PF11641">
    <property type="entry name" value="Antigen_Bd37"/>
    <property type="match status" value="1"/>
</dbReference>
<keyword id="KW-0002">3D-structure</keyword>
<keyword id="KW-1003">Cell membrane</keyword>
<keyword id="KW-1015">Disulfide bond</keyword>
<keyword id="KW-0325">Glycoprotein</keyword>
<keyword id="KW-0336">GPI-anchor</keyword>
<keyword id="KW-0449">Lipoprotein</keyword>
<keyword id="KW-0472">Membrane</keyword>
<keyword id="KW-0477">Merozoite</keyword>
<keyword id="KW-0564">Palmitate</keyword>
<keyword id="KW-0964">Secreted</keyword>
<keyword id="KW-0732">Signal</keyword>
<sequence length="341" mass="36282">MKTSKILNTAAICLLAMGFNGNNVSCTNLNGSQEPAAANPVVSTPGNDAQQAGTQQGGANSKSVPEQQPQQAAGETTATVVVKTLDVLRGELRGQREAFLSEIIKSDGPFTILQLVGYLRVVDTDLLLKVDSTKVDEAGKKVKAYLEKIGIRGDSVEAALDNLMIKVYEITKGTVESSAQGTDSEELKTLLLKFSEDLKAEQELHSEAKGGEALLSSMKTQHDELLKKFAALTPTFLTSEDISGYLTVPEYGAPMNAAKWKKVEGMIHGKLESSEVPANLKALVAELIELREQMMDLLYGPIGHHDCAAGSGQGSSPKKPSFAAVPSSLSAIVFGIIVSMF</sequence>
<evidence type="ECO:0000255" key="1"/>
<evidence type="ECO:0000255" key="2">
    <source>
        <dbReference type="PROSITE-ProRule" id="PRU00498"/>
    </source>
</evidence>
<evidence type="ECO:0000256" key="3">
    <source>
        <dbReference type="SAM" id="MobiDB-lite"/>
    </source>
</evidence>
<evidence type="ECO:0000269" key="4">
    <source>
    </source>
</evidence>
<evidence type="ECO:0000269" key="5">
    <source>
    </source>
</evidence>
<evidence type="ECO:0000269" key="6">
    <source>
    </source>
</evidence>
<evidence type="ECO:0000269" key="7">
    <source>
    </source>
</evidence>
<evidence type="ECO:0000269" key="8">
    <source>
    </source>
</evidence>
<evidence type="ECO:0000303" key="9">
    <source>
    </source>
</evidence>
<evidence type="ECO:0000303" key="10">
    <source>
    </source>
</evidence>
<evidence type="ECO:0000303" key="11">
    <source>
    </source>
</evidence>
<evidence type="ECO:0000305" key="12"/>
<evidence type="ECO:0000312" key="13">
    <source>
        <dbReference type="EMBL" id="CAD19563.1"/>
    </source>
</evidence>
<evidence type="ECO:0007744" key="14">
    <source>
        <dbReference type="PDB" id="2JO7"/>
    </source>
</evidence>
<evidence type="ECO:0007744" key="15">
    <source>
        <dbReference type="PDB" id="2LUD"/>
    </source>
</evidence>
<evidence type="ECO:0007829" key="16">
    <source>
        <dbReference type="PDB" id="2JO7"/>
    </source>
</evidence>
<reference evidence="13" key="1">
    <citation type="journal article" date="2007" name="Parasitology">
        <title>Recombinant protein Bd37 protected gerbils against heterologous challenges with isolates of Babesia divergens polymorphic for the bd37 gene.</title>
        <authorList>
            <person name="Hadj-Kaddour K."/>
            <person name="Carcy B."/>
            <person name="Vallet A."/>
            <person name="Randazzo S."/>
            <person name="Delbecq S."/>
            <person name="Kleuskens J."/>
            <person name="Schetters T."/>
            <person name="Gorenflot A."/>
            <person name="Precigout E."/>
        </authorList>
    </citation>
    <scope>NUCLEOTIDE SEQUENCE [MRNA]</scope>
    <source>
        <strain evidence="13">Rouen 1987</strain>
    </source>
</reference>
<reference evidence="12" key="2">
    <citation type="journal article" date="1995" name="Infect. Immun.">
        <title>A 37-kilodalton glycoprotein of Babesia divergens is a major component of a protective fraction containing low-molecular-mass culture-derived exoantigens.</title>
        <authorList>
            <person name="Carcy B."/>
            <person name="Precigout E."/>
            <person name="Valentin A."/>
            <person name="Gorenflot A."/>
            <person name="Schrevel J."/>
        </authorList>
    </citation>
    <scope>SUBCELLULAR LOCATION</scope>
    <scope>DEVELOPMENTAL STAGE</scope>
    <scope>GLYCOSYLATION</scope>
    <scope>PALMITOYLATION</scope>
    <source>
        <strain evidence="11">Munich 87</strain>
        <strain evidence="11">Rouen 1987</strain>
    </source>
</reference>
<reference evidence="12" key="3">
    <citation type="journal article" date="2002" name="Parasitology">
        <title>Babesia divergens: cloning and biochemical characterization of Bd37.</title>
        <authorList>
            <person name="Delbecq S."/>
            <person name="Precigout E."/>
            <person name="Vallet A."/>
            <person name="Carcy B."/>
            <person name="Schetters T.P."/>
            <person name="Gorenflot A."/>
        </authorList>
    </citation>
    <scope>SUBCELLULAR LOCATION</scope>
    <scope>PROTEOLYTIC CLEAVAGE</scope>
    <scope>DISULFIDE BOND</scope>
</reference>
<reference key="4">
    <citation type="journal article" date="2004" name="Int. J. Parasitol.">
        <title>Association between sequence polymorphism in an epitope of Babesia divergens Bd37 exoantigen and protection induced by passive transfer.</title>
        <authorList>
            <person name="Precigout E."/>
            <person name="Delbecq S."/>
            <person name="Vallet A."/>
            <person name="Carcy B."/>
            <person name="Camillieri S."/>
            <person name="Hadj-Kaddour K."/>
            <person name="Kleuskens J."/>
            <person name="Schetters T."/>
            <person name="Gorenflot A."/>
        </authorList>
    </citation>
    <scope>SUBCELLULAR LOCATION</scope>
    <scope>DEVELOPMENTAL STAGE</scope>
    <source>
        <strain evidence="9">6303E</strain>
        <strain evidence="9">Rouen 1987</strain>
        <strain evidence="9">W8843</strain>
    </source>
</reference>
<reference evidence="14" key="5">
    <citation type="journal article" date="2008" name="J. Mol. Biol.">
        <title>The solution structure of the adhesion protein Bd37 from Babesia divergens reveals structural homology with eukaryotic proteins involved in membrane trafficking.</title>
        <authorList>
            <person name="Delbecq S."/>
            <person name="Auguin D."/>
            <person name="Yang Y.S."/>
            <person name="Lohr F."/>
            <person name="Arold S."/>
            <person name="Schetters T."/>
            <person name="Precigout E."/>
            <person name="Gorenflot A."/>
            <person name="Roumestand C."/>
        </authorList>
    </citation>
    <scope>STRUCTURE BY NMR OF 82-305</scope>
    <scope>FUNCTION</scope>
    <scope>MUTAGENESIS OF LYS-83; THR-84; ASP-86; LEU-92; GLN-95 AND ARG-96</scope>
</reference>
<reference evidence="15" key="6">
    <citation type="journal article" date="2013" name="Biomol. NMR. Assign.">
        <title>1H, 15N and 13C Backbone resonance assignments of a conformational mutant of the adhesion protein delta-Bd37 from Babesia divergens.</title>
        <authorList>
            <person name="Barthe P."/>
            <person name="Murciano B."/>
            <person name="Schetters T."/>
            <person name="Gorenflot A."/>
            <person name="Delbecq S."/>
            <person name="Roumestand C."/>
        </authorList>
    </citation>
    <scope>STRUCTURE BY NMR OF 82-305 OF CONFORMATIONAL MUTANT A-261; A-292 AND A-296</scope>
</reference>